<reference key="1">
    <citation type="journal article" date="2009" name="J. Bacteriol.">
        <title>Role of conjugative elements in the evolution of the multidrug-resistant pandemic clone Streptococcus pneumoniae Spain23F ST81.</title>
        <authorList>
            <person name="Croucher N.J."/>
            <person name="Walker D."/>
            <person name="Romero P."/>
            <person name="Lennard N."/>
            <person name="Paterson G.K."/>
            <person name="Bason N.C."/>
            <person name="Mitchell A.M."/>
            <person name="Quail M.A."/>
            <person name="Andrew P.W."/>
            <person name="Parkhill J."/>
            <person name="Bentley S.D."/>
            <person name="Mitchell T.J."/>
        </authorList>
    </citation>
    <scope>NUCLEOTIDE SEQUENCE [LARGE SCALE GENOMIC DNA]</scope>
    <source>
        <strain>ATCC 700669 / Spain 23F-1</strain>
    </source>
</reference>
<organism>
    <name type="scientific">Streptococcus pneumoniae (strain ATCC 700669 / Spain 23F-1)</name>
    <dbReference type="NCBI Taxonomy" id="561276"/>
    <lineage>
        <taxon>Bacteria</taxon>
        <taxon>Bacillati</taxon>
        <taxon>Bacillota</taxon>
        <taxon>Bacilli</taxon>
        <taxon>Lactobacillales</taxon>
        <taxon>Streptococcaceae</taxon>
        <taxon>Streptococcus</taxon>
    </lineage>
</organism>
<evidence type="ECO:0000255" key="1">
    <source>
        <dbReference type="HAMAP-Rule" id="MF_00800"/>
    </source>
</evidence>
<accession>B8ZMP5</accession>
<protein>
    <recommendedName>
        <fullName evidence="1">UPF0340 protein SPN23F05980</fullName>
    </recommendedName>
</protein>
<sequence>MNETQIQRETRQVVEDVLEKTNLKQGALFVLGLSSSEVLGGHIGKESSQEIGELIVETILDILGSRGIHLAVQGCEHVNRALVVERQVAEQFGLEIVSVHPTLHAGGSGQLAAFKFMQDPVEVEFIKAHAGLDIGDTAIGMHVKHVQVPIRPILREIGHAHVTALASRPKLIGGARAHYPQDAIRKT</sequence>
<gene>
    <name type="ordered locus">SPN23F05980</name>
</gene>
<comment type="similarity">
    <text evidence="1">Belongs to the UPF0340 family.</text>
</comment>
<feature type="chain" id="PRO_1000148528" description="UPF0340 protein SPN23F05980">
    <location>
        <begin position="1"/>
        <end position="187"/>
    </location>
</feature>
<dbReference type="EMBL" id="FM211187">
    <property type="protein sequence ID" value="CAR68448.1"/>
    <property type="molecule type" value="Genomic_DNA"/>
</dbReference>
<dbReference type="RefSeq" id="WP_001006363.1">
    <property type="nucleotide sequence ID" value="NC_011900.1"/>
</dbReference>
<dbReference type="SMR" id="B8ZMP5"/>
<dbReference type="KEGG" id="sne:SPN23F05980"/>
<dbReference type="HOGENOM" id="CLU_106658_0_0_9"/>
<dbReference type="Gene3D" id="3.40.50.10360">
    <property type="entry name" value="Hypothetical protein TT1679"/>
    <property type="match status" value="1"/>
</dbReference>
<dbReference type="HAMAP" id="MF_00800">
    <property type="entry name" value="UPF0340"/>
    <property type="match status" value="1"/>
</dbReference>
<dbReference type="InterPro" id="IPR028345">
    <property type="entry name" value="Antibiotic_NAT-like"/>
</dbReference>
<dbReference type="InterPro" id="IPR006340">
    <property type="entry name" value="DUF436"/>
</dbReference>
<dbReference type="NCBIfam" id="TIGR01440">
    <property type="entry name" value="TIGR01440 family protein"/>
    <property type="match status" value="1"/>
</dbReference>
<dbReference type="Pfam" id="PF04260">
    <property type="entry name" value="DUF436"/>
    <property type="match status" value="1"/>
</dbReference>
<dbReference type="PIRSF" id="PIRSF007510">
    <property type="entry name" value="UCP007510"/>
    <property type="match status" value="1"/>
</dbReference>
<dbReference type="SUPFAM" id="SSF110710">
    <property type="entry name" value="TTHA0583/YokD-like"/>
    <property type="match status" value="1"/>
</dbReference>
<proteinExistence type="inferred from homology"/>
<name>Y598_STRPJ</name>